<proteinExistence type="evidence at protein level"/>
<sequence>MNLLTTKIDLDAIAHNTRVLKQMAGPAKLMAVVKANAYNHGVEKVAPVIAAHGADAFGVATLAEAMQLRDIGISQEVLCWIWTPEQDFRAAIDRNIDLAVISPAHAKALIETDAEHIRVSIKIDSGLHRSGVDEQEWEGVFSALAAAPHIEVTGMFTHLACADEPENPETDRQIIAFRRALALARKHGLECPVNHVCNSPAFLTRSDLHMEMVRPGLAFYGLEPVAGLEHGLKPAMTWEAKVSVVKQIEAGQGTSYGLTWRAEDRGFVAVVPAGYADGMPRHAQGKFSVTIDGLDYPQVGRVCMDQFVISLGDNPHGVEAGAKAVIFGENGHDATDFAERLDTINYEVVCRPTGRTVRAYV</sequence>
<protein>
    <recommendedName>
        <fullName evidence="1">Alanine racemase</fullName>
        <ecNumber evidence="1">5.1.1.1</ecNumber>
    </recommendedName>
</protein>
<comment type="function">
    <text evidence="1">Catalyzes the interconversion of L-alanine and D-alanine. May also act on other amino acids.</text>
</comment>
<comment type="catalytic activity">
    <reaction evidence="1">
        <text>L-alanine = D-alanine</text>
        <dbReference type="Rhea" id="RHEA:20249"/>
        <dbReference type="ChEBI" id="CHEBI:57416"/>
        <dbReference type="ChEBI" id="CHEBI:57972"/>
        <dbReference type="EC" id="5.1.1.1"/>
    </reaction>
</comment>
<comment type="cofactor">
    <cofactor evidence="1 2">
        <name>pyridoxal 5'-phosphate</name>
        <dbReference type="ChEBI" id="CHEBI:597326"/>
    </cofactor>
</comment>
<comment type="pathway">
    <text evidence="1">Amino-acid biosynthesis; D-alanine biosynthesis; D-alanine from L-alanine: step 1/1.</text>
</comment>
<comment type="subunit">
    <text evidence="3">Homodimer.</text>
</comment>
<comment type="similarity">
    <text evidence="1">Belongs to the alanine racemase family.</text>
</comment>
<accession>Q8RSU9</accession>
<evidence type="ECO:0000255" key="1">
    <source>
        <dbReference type="HAMAP-Rule" id="MF_01201"/>
    </source>
</evidence>
<evidence type="ECO:0000269" key="2">
    <source ref="4"/>
</evidence>
<evidence type="ECO:0000305" key="3">
    <source ref="4"/>
</evidence>
<evidence type="ECO:0007829" key="4">
    <source>
        <dbReference type="PDB" id="2DY3"/>
    </source>
</evidence>
<organism>
    <name type="scientific">Corynebacterium glutamicum (strain ATCC 13032 / DSM 20300 / JCM 1318 / BCRC 11384 / CCUG 27702 / LMG 3730 / NBRC 12168 / NCIMB 10025 / NRRL B-2784 / 534)</name>
    <dbReference type="NCBI Taxonomy" id="196627"/>
    <lineage>
        <taxon>Bacteria</taxon>
        <taxon>Bacillati</taxon>
        <taxon>Actinomycetota</taxon>
        <taxon>Actinomycetes</taxon>
        <taxon>Mycobacteriales</taxon>
        <taxon>Corynebacteriaceae</taxon>
        <taxon>Corynebacterium</taxon>
    </lineage>
</organism>
<reference key="1">
    <citation type="journal article" date="2002" name="J. Biotechnol.">
        <title>The alanine racemase gene alr is an alternative to antibiotic resistance genes in cloning systems for industrial Corynebacterium glutamicum strains.</title>
        <authorList>
            <person name="Tauch A."/>
            <person name="Goetker S."/>
            <person name="Puehler A."/>
            <person name="Kalinowski J."/>
            <person name="Thierbach G."/>
        </authorList>
    </citation>
    <scope>NUCLEOTIDE SEQUENCE [GENOMIC DNA]</scope>
    <source>
        <strain>ATCC 13032 / DSM 20300 / JCM 1318 / BCRC 11384 / CCUG 27702 / LMG 3730 / NBRC 12168 / NCIMB 10025 / NRRL B-2784 / 534</strain>
    </source>
</reference>
<reference key="2">
    <citation type="journal article" date="2003" name="Appl. Microbiol. Biotechnol.">
        <title>The Corynebacterium glutamicum genome: features and impacts on biotechnological processes.</title>
        <authorList>
            <person name="Ikeda M."/>
            <person name="Nakagawa S."/>
        </authorList>
    </citation>
    <scope>NUCLEOTIDE SEQUENCE [LARGE SCALE GENOMIC DNA]</scope>
    <source>
        <strain>ATCC 13032 / DSM 20300 / JCM 1318 / BCRC 11384 / CCUG 27702 / LMG 3730 / NBRC 12168 / NCIMB 10025 / NRRL B-2784 / 534</strain>
    </source>
</reference>
<reference key="3">
    <citation type="journal article" date="2003" name="J. Biotechnol.">
        <title>The complete Corynebacterium glutamicum ATCC 13032 genome sequence and its impact on the production of L-aspartate-derived amino acids and vitamins.</title>
        <authorList>
            <person name="Kalinowski J."/>
            <person name="Bathe B."/>
            <person name="Bartels D."/>
            <person name="Bischoff N."/>
            <person name="Bott M."/>
            <person name="Burkovski A."/>
            <person name="Dusch N."/>
            <person name="Eggeling L."/>
            <person name="Eikmanns B.J."/>
            <person name="Gaigalat L."/>
            <person name="Goesmann A."/>
            <person name="Hartmann M."/>
            <person name="Huthmacher K."/>
            <person name="Kraemer R."/>
            <person name="Linke B."/>
            <person name="McHardy A.C."/>
            <person name="Meyer F."/>
            <person name="Moeckel B."/>
            <person name="Pfefferle W."/>
            <person name="Puehler A."/>
            <person name="Rey D.A."/>
            <person name="Rueckert C."/>
            <person name="Rupp O."/>
            <person name="Sahm H."/>
            <person name="Wendisch V.F."/>
            <person name="Wiegraebe I."/>
            <person name="Tauch A."/>
        </authorList>
    </citation>
    <scope>NUCLEOTIDE SEQUENCE [LARGE SCALE GENOMIC DNA]</scope>
    <source>
        <strain>ATCC 13032 / DSM 20300 / JCM 1318 / BCRC 11384 / CCUG 27702 / LMG 3730 / NBRC 12168 / NCIMB 10025 / NRRL B-2784 / 534</strain>
    </source>
</reference>
<reference key="4">
    <citation type="submission" date="2006-09" db="PDB data bank">
        <title>Crystal structure of alanine racemase from Corynebacterium glutamicum at 2.1 A resolution.</title>
        <authorList>
            <person name="Miyaguchi I."/>
            <person name="Sasaki C."/>
            <person name="Kato R."/>
            <person name="Oikawa T."/>
            <person name="Sugio S."/>
        </authorList>
    </citation>
    <scope>X-RAY CRYSTALLOGRAPHY (2.10 ANGSTROMS) IN COMPLEX WITH PYRIDOXAL PHOSPHATE</scope>
    <scope>COFACTOR</scope>
    <scope>SUBUNIT</scope>
    <scope>PYRIDOXAL PHOSPHATE AT LYS-34</scope>
</reference>
<feature type="chain" id="PRO_0000114512" description="Alanine racemase">
    <location>
        <begin position="1"/>
        <end position="361"/>
    </location>
</feature>
<feature type="active site" description="Proton acceptor; specific for D-alanine" evidence="1">
    <location>
        <position position="34"/>
    </location>
</feature>
<feature type="active site" description="Proton acceptor; specific for L-alanine" evidence="1">
    <location>
        <position position="256"/>
    </location>
</feature>
<feature type="binding site" evidence="1">
    <location>
        <position position="129"/>
    </location>
    <ligand>
        <name>substrate</name>
    </ligand>
</feature>
<feature type="binding site" evidence="1">
    <location>
        <position position="304"/>
    </location>
    <ligand>
        <name>substrate</name>
    </ligand>
</feature>
<feature type="modified residue" description="N6-(pyridoxal phosphate)lysine">
    <location>
        <position position="34"/>
    </location>
</feature>
<feature type="strand" evidence="4">
    <location>
        <begin position="3"/>
        <end position="9"/>
    </location>
</feature>
<feature type="helix" evidence="4">
    <location>
        <begin position="10"/>
        <end position="24"/>
    </location>
</feature>
<feature type="strand" evidence="4">
    <location>
        <begin position="27"/>
        <end position="32"/>
    </location>
</feature>
<feature type="helix" evidence="4">
    <location>
        <begin position="34"/>
        <end position="39"/>
    </location>
</feature>
<feature type="helix" evidence="4">
    <location>
        <begin position="42"/>
        <end position="51"/>
    </location>
</feature>
<feature type="strand" evidence="4">
    <location>
        <begin position="56"/>
        <end position="61"/>
    </location>
</feature>
<feature type="helix" evidence="4">
    <location>
        <begin position="62"/>
        <end position="70"/>
    </location>
</feature>
<feature type="strand" evidence="4">
    <location>
        <begin position="75"/>
        <end position="79"/>
    </location>
</feature>
<feature type="helix" evidence="4">
    <location>
        <begin position="88"/>
        <end position="92"/>
    </location>
</feature>
<feature type="turn" evidence="4">
    <location>
        <begin position="93"/>
        <end position="95"/>
    </location>
</feature>
<feature type="strand" evidence="4">
    <location>
        <begin position="97"/>
        <end position="100"/>
    </location>
</feature>
<feature type="helix" evidence="4">
    <location>
        <begin position="103"/>
        <end position="110"/>
    </location>
</feature>
<feature type="strand" evidence="4">
    <location>
        <begin position="117"/>
        <end position="123"/>
    </location>
</feature>
<feature type="strand" evidence="4">
    <location>
        <begin position="129"/>
        <end position="132"/>
    </location>
</feature>
<feature type="helix" evidence="4">
    <location>
        <begin position="134"/>
        <end position="145"/>
    </location>
</feature>
<feature type="strand" evidence="4">
    <location>
        <begin position="150"/>
        <end position="156"/>
    </location>
</feature>
<feature type="helix" evidence="4">
    <location>
        <begin position="170"/>
        <end position="186"/>
    </location>
</feature>
<feature type="helix" evidence="4">
    <location>
        <begin position="199"/>
        <end position="204"/>
    </location>
</feature>
<feature type="helix" evidence="4">
    <location>
        <begin position="206"/>
        <end position="208"/>
    </location>
</feature>
<feature type="helix" evidence="4">
    <location>
        <begin position="217"/>
        <end position="220"/>
    </location>
</feature>
<feature type="strand" evidence="4">
    <location>
        <begin position="236"/>
        <end position="241"/>
    </location>
</feature>
<feature type="strand" evidence="4">
    <location>
        <begin position="244"/>
        <end position="247"/>
    </location>
</feature>
<feature type="strand" evidence="4">
    <location>
        <begin position="267"/>
        <end position="272"/>
    </location>
</feature>
<feature type="turn" evidence="4">
    <location>
        <begin position="275"/>
        <end position="278"/>
    </location>
</feature>
<feature type="helix" evidence="4">
    <location>
        <begin position="281"/>
        <end position="283"/>
    </location>
</feature>
<feature type="turn" evidence="4">
    <location>
        <begin position="284"/>
        <end position="286"/>
    </location>
</feature>
<feature type="strand" evidence="4">
    <location>
        <begin position="288"/>
        <end position="291"/>
    </location>
</feature>
<feature type="strand" evidence="4">
    <location>
        <begin position="294"/>
        <end position="300"/>
    </location>
</feature>
<feature type="strand" evidence="4">
    <location>
        <begin position="307"/>
        <end position="312"/>
    </location>
</feature>
<feature type="strand" evidence="4">
    <location>
        <begin position="323"/>
        <end position="328"/>
    </location>
</feature>
<feature type="helix" evidence="4">
    <location>
        <begin position="334"/>
        <end position="340"/>
    </location>
</feature>
<feature type="helix" evidence="4">
    <location>
        <begin position="345"/>
        <end position="350"/>
    </location>
</feature>
<feature type="strand" evidence="4">
    <location>
        <begin position="357"/>
        <end position="361"/>
    </location>
</feature>
<dbReference type="EC" id="5.1.1.1" evidence="1"/>
<dbReference type="EMBL" id="AY077456">
    <property type="protein sequence ID" value="AAL77207.1"/>
    <property type="molecule type" value="Genomic_DNA"/>
</dbReference>
<dbReference type="EMBL" id="BA000036">
    <property type="protein sequence ID" value="BAB97981.1"/>
    <property type="molecule type" value="Genomic_DNA"/>
</dbReference>
<dbReference type="EMBL" id="BX927149">
    <property type="protein sequence ID" value="CAF19293.1"/>
    <property type="molecule type" value="Genomic_DNA"/>
</dbReference>
<dbReference type="RefSeq" id="NP_599824.1">
    <property type="nucleotide sequence ID" value="NC_003450.3"/>
</dbReference>
<dbReference type="RefSeq" id="WP_011013748.1">
    <property type="nucleotide sequence ID" value="NC_006958.1"/>
</dbReference>
<dbReference type="PDB" id="2DY3">
    <property type="method" value="X-ray"/>
    <property type="resolution" value="2.10 A"/>
    <property type="chains" value="A/B/C/D=1-361"/>
</dbReference>
<dbReference type="PDBsum" id="2DY3"/>
<dbReference type="SMR" id="Q8RSU9"/>
<dbReference type="STRING" id="196627.cg0681"/>
<dbReference type="GeneID" id="1018592"/>
<dbReference type="KEGG" id="cgb:cg0681"/>
<dbReference type="KEGG" id="cgl:Cgl0588"/>
<dbReference type="PATRIC" id="fig|196627.13.peg.579"/>
<dbReference type="eggNOG" id="COG0787">
    <property type="taxonomic scope" value="Bacteria"/>
</dbReference>
<dbReference type="HOGENOM" id="CLU_028393_0_0_11"/>
<dbReference type="OrthoDB" id="9813814at2"/>
<dbReference type="BioCyc" id="CORYNE:G18NG-10150-MONOMER"/>
<dbReference type="UniPathway" id="UPA00042">
    <property type="reaction ID" value="UER00497"/>
</dbReference>
<dbReference type="EvolutionaryTrace" id="Q8RSU9"/>
<dbReference type="Proteomes" id="UP000000582">
    <property type="component" value="Chromosome"/>
</dbReference>
<dbReference type="Proteomes" id="UP000001009">
    <property type="component" value="Chromosome"/>
</dbReference>
<dbReference type="GO" id="GO:0005829">
    <property type="term" value="C:cytosol"/>
    <property type="evidence" value="ECO:0007669"/>
    <property type="project" value="TreeGrafter"/>
</dbReference>
<dbReference type="GO" id="GO:0008784">
    <property type="term" value="F:alanine racemase activity"/>
    <property type="evidence" value="ECO:0007669"/>
    <property type="project" value="UniProtKB-UniRule"/>
</dbReference>
<dbReference type="GO" id="GO:0030170">
    <property type="term" value="F:pyridoxal phosphate binding"/>
    <property type="evidence" value="ECO:0007669"/>
    <property type="project" value="UniProtKB-UniRule"/>
</dbReference>
<dbReference type="GO" id="GO:0030632">
    <property type="term" value="P:D-alanine biosynthetic process"/>
    <property type="evidence" value="ECO:0007669"/>
    <property type="project" value="UniProtKB-UniRule"/>
</dbReference>
<dbReference type="GO" id="GO:0009252">
    <property type="term" value="P:peptidoglycan biosynthetic process"/>
    <property type="evidence" value="ECO:0007669"/>
    <property type="project" value="TreeGrafter"/>
</dbReference>
<dbReference type="CDD" id="cd00430">
    <property type="entry name" value="PLPDE_III_AR"/>
    <property type="match status" value="1"/>
</dbReference>
<dbReference type="FunFam" id="3.20.20.10:FF:000002">
    <property type="entry name" value="Alanine racemase"/>
    <property type="match status" value="1"/>
</dbReference>
<dbReference type="Gene3D" id="3.20.20.10">
    <property type="entry name" value="Alanine racemase"/>
    <property type="match status" value="1"/>
</dbReference>
<dbReference type="Gene3D" id="2.40.37.10">
    <property type="entry name" value="Lyase, Ornithine Decarboxylase, Chain A, domain 1"/>
    <property type="match status" value="1"/>
</dbReference>
<dbReference type="HAMAP" id="MF_01201">
    <property type="entry name" value="Ala_racemase"/>
    <property type="match status" value="1"/>
</dbReference>
<dbReference type="InterPro" id="IPR000821">
    <property type="entry name" value="Ala_racemase"/>
</dbReference>
<dbReference type="InterPro" id="IPR009006">
    <property type="entry name" value="Ala_racemase/Decarboxylase_C"/>
</dbReference>
<dbReference type="InterPro" id="IPR011079">
    <property type="entry name" value="Ala_racemase_C"/>
</dbReference>
<dbReference type="InterPro" id="IPR001608">
    <property type="entry name" value="Ala_racemase_N"/>
</dbReference>
<dbReference type="InterPro" id="IPR029066">
    <property type="entry name" value="PLP-binding_barrel"/>
</dbReference>
<dbReference type="NCBIfam" id="TIGR00492">
    <property type="entry name" value="alr"/>
    <property type="match status" value="1"/>
</dbReference>
<dbReference type="PANTHER" id="PTHR30511">
    <property type="entry name" value="ALANINE RACEMASE"/>
    <property type="match status" value="1"/>
</dbReference>
<dbReference type="PANTHER" id="PTHR30511:SF0">
    <property type="entry name" value="ALANINE RACEMASE, CATABOLIC-RELATED"/>
    <property type="match status" value="1"/>
</dbReference>
<dbReference type="Pfam" id="PF00842">
    <property type="entry name" value="Ala_racemase_C"/>
    <property type="match status" value="1"/>
</dbReference>
<dbReference type="Pfam" id="PF01168">
    <property type="entry name" value="Ala_racemase_N"/>
    <property type="match status" value="1"/>
</dbReference>
<dbReference type="PRINTS" id="PR00992">
    <property type="entry name" value="ALARACEMASE"/>
</dbReference>
<dbReference type="SMART" id="SM01005">
    <property type="entry name" value="Ala_racemase_C"/>
    <property type="match status" value="1"/>
</dbReference>
<dbReference type="SUPFAM" id="SSF50621">
    <property type="entry name" value="Alanine racemase C-terminal domain-like"/>
    <property type="match status" value="1"/>
</dbReference>
<dbReference type="SUPFAM" id="SSF51419">
    <property type="entry name" value="PLP-binding barrel"/>
    <property type="match status" value="1"/>
</dbReference>
<keyword id="KW-0002">3D-structure</keyword>
<keyword id="KW-0413">Isomerase</keyword>
<keyword id="KW-0663">Pyridoxal phosphate</keyword>
<keyword id="KW-1185">Reference proteome</keyword>
<gene>
    <name type="primary">alr</name>
    <name type="ordered locus">Cgl0588</name>
    <name type="ordered locus">cg0681</name>
</gene>
<name>ALR_CORGL</name>